<proteinExistence type="inferred from homology"/>
<dbReference type="EC" id="5.4.2.10" evidence="1"/>
<dbReference type="EMBL" id="AE017333">
    <property type="protein sequence ID" value="AAU39167.1"/>
    <property type="status" value="ALT_INIT"/>
    <property type="molecule type" value="Genomic_DNA"/>
</dbReference>
<dbReference type="EMBL" id="CP000002">
    <property type="protein sequence ID" value="AAU21822.1"/>
    <property type="molecule type" value="Genomic_DNA"/>
</dbReference>
<dbReference type="RefSeq" id="WP_011197484.1">
    <property type="nucleotide sequence ID" value="NC_006322.1"/>
</dbReference>
<dbReference type="SMR" id="Q65P47"/>
<dbReference type="STRING" id="279010.BL02703"/>
<dbReference type="GeneID" id="92858833"/>
<dbReference type="KEGG" id="bld:BLi00203"/>
<dbReference type="KEGG" id="bli:BL02703"/>
<dbReference type="PATRIC" id="fig|279010.13.peg.183"/>
<dbReference type="eggNOG" id="COG1109">
    <property type="taxonomic scope" value="Bacteria"/>
</dbReference>
<dbReference type="HOGENOM" id="CLU_016950_7_0_9"/>
<dbReference type="Proteomes" id="UP000000606">
    <property type="component" value="Chromosome"/>
</dbReference>
<dbReference type="Bgee" id="BL02703">
    <property type="expression patterns" value="Expressed in skin epidermis and 10 other cell types or tissues"/>
</dbReference>
<dbReference type="GO" id="GO:0005829">
    <property type="term" value="C:cytosol"/>
    <property type="evidence" value="ECO:0007669"/>
    <property type="project" value="TreeGrafter"/>
</dbReference>
<dbReference type="GO" id="GO:0000287">
    <property type="term" value="F:magnesium ion binding"/>
    <property type="evidence" value="ECO:0007669"/>
    <property type="project" value="UniProtKB-UniRule"/>
</dbReference>
<dbReference type="GO" id="GO:0008966">
    <property type="term" value="F:phosphoglucosamine mutase activity"/>
    <property type="evidence" value="ECO:0007669"/>
    <property type="project" value="UniProtKB-UniRule"/>
</dbReference>
<dbReference type="GO" id="GO:0004615">
    <property type="term" value="F:phosphomannomutase activity"/>
    <property type="evidence" value="ECO:0007669"/>
    <property type="project" value="TreeGrafter"/>
</dbReference>
<dbReference type="GO" id="GO:0005975">
    <property type="term" value="P:carbohydrate metabolic process"/>
    <property type="evidence" value="ECO:0007669"/>
    <property type="project" value="InterPro"/>
</dbReference>
<dbReference type="GO" id="GO:0009252">
    <property type="term" value="P:peptidoglycan biosynthetic process"/>
    <property type="evidence" value="ECO:0007669"/>
    <property type="project" value="TreeGrafter"/>
</dbReference>
<dbReference type="GO" id="GO:0006048">
    <property type="term" value="P:UDP-N-acetylglucosamine biosynthetic process"/>
    <property type="evidence" value="ECO:0007669"/>
    <property type="project" value="TreeGrafter"/>
</dbReference>
<dbReference type="CDD" id="cd05802">
    <property type="entry name" value="GlmM"/>
    <property type="match status" value="1"/>
</dbReference>
<dbReference type="FunFam" id="3.30.310.50:FF:000001">
    <property type="entry name" value="Phosphoglucosamine mutase"/>
    <property type="match status" value="1"/>
</dbReference>
<dbReference type="FunFam" id="3.40.120.10:FF:000001">
    <property type="entry name" value="Phosphoglucosamine mutase"/>
    <property type="match status" value="1"/>
</dbReference>
<dbReference type="FunFam" id="3.40.120.10:FF:000002">
    <property type="entry name" value="Phosphoglucosamine mutase"/>
    <property type="match status" value="1"/>
</dbReference>
<dbReference type="Gene3D" id="3.40.120.10">
    <property type="entry name" value="Alpha-D-Glucose-1,6-Bisphosphate, subunit A, domain 3"/>
    <property type="match status" value="3"/>
</dbReference>
<dbReference type="Gene3D" id="3.30.310.50">
    <property type="entry name" value="Alpha-D-phosphohexomutase, C-terminal domain"/>
    <property type="match status" value="1"/>
</dbReference>
<dbReference type="HAMAP" id="MF_01554_B">
    <property type="entry name" value="GlmM_B"/>
    <property type="match status" value="1"/>
</dbReference>
<dbReference type="InterPro" id="IPR005844">
    <property type="entry name" value="A-D-PHexomutase_a/b/a-I"/>
</dbReference>
<dbReference type="InterPro" id="IPR016055">
    <property type="entry name" value="A-D-PHexomutase_a/b/a-I/II/III"/>
</dbReference>
<dbReference type="InterPro" id="IPR005845">
    <property type="entry name" value="A-D-PHexomutase_a/b/a-II"/>
</dbReference>
<dbReference type="InterPro" id="IPR005846">
    <property type="entry name" value="A-D-PHexomutase_a/b/a-III"/>
</dbReference>
<dbReference type="InterPro" id="IPR005843">
    <property type="entry name" value="A-D-PHexomutase_C"/>
</dbReference>
<dbReference type="InterPro" id="IPR036900">
    <property type="entry name" value="A-D-PHexomutase_C_sf"/>
</dbReference>
<dbReference type="InterPro" id="IPR016066">
    <property type="entry name" value="A-D-PHexomutase_CS"/>
</dbReference>
<dbReference type="InterPro" id="IPR005841">
    <property type="entry name" value="Alpha-D-phosphohexomutase_SF"/>
</dbReference>
<dbReference type="InterPro" id="IPR006352">
    <property type="entry name" value="GlmM_bact"/>
</dbReference>
<dbReference type="InterPro" id="IPR050060">
    <property type="entry name" value="Phosphoglucosamine_mutase"/>
</dbReference>
<dbReference type="NCBIfam" id="TIGR01455">
    <property type="entry name" value="glmM"/>
    <property type="match status" value="1"/>
</dbReference>
<dbReference type="NCBIfam" id="NF008139">
    <property type="entry name" value="PRK10887.1"/>
    <property type="match status" value="1"/>
</dbReference>
<dbReference type="PANTHER" id="PTHR42946:SF1">
    <property type="entry name" value="PHOSPHOGLUCOMUTASE (ALPHA-D-GLUCOSE-1,6-BISPHOSPHATE-DEPENDENT)"/>
    <property type="match status" value="1"/>
</dbReference>
<dbReference type="PANTHER" id="PTHR42946">
    <property type="entry name" value="PHOSPHOHEXOSE MUTASE"/>
    <property type="match status" value="1"/>
</dbReference>
<dbReference type="Pfam" id="PF02878">
    <property type="entry name" value="PGM_PMM_I"/>
    <property type="match status" value="1"/>
</dbReference>
<dbReference type="Pfam" id="PF02879">
    <property type="entry name" value="PGM_PMM_II"/>
    <property type="match status" value="1"/>
</dbReference>
<dbReference type="Pfam" id="PF02880">
    <property type="entry name" value="PGM_PMM_III"/>
    <property type="match status" value="1"/>
</dbReference>
<dbReference type="Pfam" id="PF00408">
    <property type="entry name" value="PGM_PMM_IV"/>
    <property type="match status" value="1"/>
</dbReference>
<dbReference type="PRINTS" id="PR00509">
    <property type="entry name" value="PGMPMM"/>
</dbReference>
<dbReference type="SUPFAM" id="SSF55957">
    <property type="entry name" value="Phosphoglucomutase, C-terminal domain"/>
    <property type="match status" value="1"/>
</dbReference>
<dbReference type="SUPFAM" id="SSF53738">
    <property type="entry name" value="Phosphoglucomutase, first 3 domains"/>
    <property type="match status" value="3"/>
</dbReference>
<dbReference type="PROSITE" id="PS00710">
    <property type="entry name" value="PGM_PMM"/>
    <property type="match status" value="1"/>
</dbReference>
<evidence type="ECO:0000255" key="1">
    <source>
        <dbReference type="HAMAP-Rule" id="MF_01554"/>
    </source>
</evidence>
<evidence type="ECO:0000305" key="2"/>
<protein>
    <recommendedName>
        <fullName evidence="1">Phosphoglucosamine mutase</fullName>
        <ecNumber evidence="1">5.4.2.10</ecNumber>
    </recommendedName>
</protein>
<accession>Q65P47</accession>
<accession>Q62ZI6</accession>
<comment type="function">
    <text evidence="1">Catalyzes the conversion of glucosamine-6-phosphate to glucosamine-1-phosphate.</text>
</comment>
<comment type="catalytic activity">
    <reaction evidence="1">
        <text>alpha-D-glucosamine 1-phosphate = D-glucosamine 6-phosphate</text>
        <dbReference type="Rhea" id="RHEA:23424"/>
        <dbReference type="ChEBI" id="CHEBI:58516"/>
        <dbReference type="ChEBI" id="CHEBI:58725"/>
        <dbReference type="EC" id="5.4.2.10"/>
    </reaction>
</comment>
<comment type="cofactor">
    <cofactor evidence="1">
        <name>Mg(2+)</name>
        <dbReference type="ChEBI" id="CHEBI:18420"/>
    </cofactor>
    <text evidence="1">Binds 1 Mg(2+) ion per subunit.</text>
</comment>
<comment type="PTM">
    <text evidence="1">Activated by phosphorylation.</text>
</comment>
<comment type="similarity">
    <text evidence="1">Belongs to the phosphohexose mutase family.</text>
</comment>
<comment type="sequence caution" evidence="2">
    <conflict type="erroneous initiation">
        <sequence resource="EMBL-CDS" id="AAU39167"/>
    </conflict>
</comment>
<feature type="chain" id="PRO_0000147845" description="Phosphoglucosamine mutase">
    <location>
        <begin position="1"/>
        <end position="448"/>
    </location>
</feature>
<feature type="active site" description="Phosphoserine intermediate" evidence="1">
    <location>
        <position position="100"/>
    </location>
</feature>
<feature type="binding site" description="via phosphate group" evidence="1">
    <location>
        <position position="100"/>
    </location>
    <ligand>
        <name>Mg(2+)</name>
        <dbReference type="ChEBI" id="CHEBI:18420"/>
    </ligand>
</feature>
<feature type="binding site" evidence="1">
    <location>
        <position position="240"/>
    </location>
    <ligand>
        <name>Mg(2+)</name>
        <dbReference type="ChEBI" id="CHEBI:18420"/>
    </ligand>
</feature>
<feature type="binding site" evidence="1">
    <location>
        <position position="242"/>
    </location>
    <ligand>
        <name>Mg(2+)</name>
        <dbReference type="ChEBI" id="CHEBI:18420"/>
    </ligand>
</feature>
<feature type="binding site" evidence="1">
    <location>
        <position position="244"/>
    </location>
    <ligand>
        <name>Mg(2+)</name>
        <dbReference type="ChEBI" id="CHEBI:18420"/>
    </ligand>
</feature>
<feature type="modified residue" description="Phosphoserine" evidence="1">
    <location>
        <position position="100"/>
    </location>
</feature>
<reference key="1">
    <citation type="journal article" date="2004" name="J. Mol. Microbiol. Biotechnol.">
        <title>The complete genome sequence of Bacillus licheniformis DSM13, an organism with great industrial potential.</title>
        <authorList>
            <person name="Veith B."/>
            <person name="Herzberg C."/>
            <person name="Steckel S."/>
            <person name="Feesche J."/>
            <person name="Maurer K.H."/>
            <person name="Ehrenreich P."/>
            <person name="Baeumer S."/>
            <person name="Henne A."/>
            <person name="Liesegang H."/>
            <person name="Merkl R."/>
            <person name="Ehrenreich A."/>
            <person name="Gottschalk G."/>
        </authorList>
    </citation>
    <scope>NUCLEOTIDE SEQUENCE [LARGE SCALE GENOMIC DNA]</scope>
    <source>
        <strain>ATCC 14580 / DSM 13 / JCM 2505 / CCUG 7422 / NBRC 12200 / NCIMB 9375 / NCTC 10341 / NRRL NRS-1264 / Gibson 46</strain>
    </source>
</reference>
<reference key="2">
    <citation type="journal article" date="2004" name="Genome Biol.">
        <title>Complete genome sequence of the industrial bacterium Bacillus licheniformis and comparisons with closely related Bacillus species.</title>
        <authorList>
            <person name="Rey M.W."/>
            <person name="Ramaiya P."/>
            <person name="Nelson B.A."/>
            <person name="Brody-Karpin S.D."/>
            <person name="Zaretsky E.J."/>
            <person name="Tang M."/>
            <person name="Lopez de Leon A."/>
            <person name="Xiang H."/>
            <person name="Gusti V."/>
            <person name="Clausen I.G."/>
            <person name="Olsen P.B."/>
            <person name="Rasmussen M.D."/>
            <person name="Andersen J.T."/>
            <person name="Joergensen P.L."/>
            <person name="Larsen T.S."/>
            <person name="Sorokin A."/>
            <person name="Bolotin A."/>
            <person name="Lapidus A."/>
            <person name="Galleron N."/>
            <person name="Ehrlich S.D."/>
            <person name="Berka R.M."/>
        </authorList>
    </citation>
    <scope>NUCLEOTIDE SEQUENCE [LARGE SCALE GENOMIC DNA]</scope>
    <source>
        <strain>ATCC 14580 / DSM 13 / JCM 2505 / CCUG 7422 / NBRC 12200 / NCIMB 9375 / NCTC 10341 / NRRL NRS-1264 / Gibson 46</strain>
    </source>
</reference>
<organism>
    <name type="scientific">Bacillus licheniformis (strain ATCC 14580 / DSM 13 / JCM 2505 / CCUG 7422 / NBRC 12200 / NCIMB 9375 / NCTC 10341 / NRRL NRS-1264 / Gibson 46)</name>
    <dbReference type="NCBI Taxonomy" id="279010"/>
    <lineage>
        <taxon>Bacteria</taxon>
        <taxon>Bacillati</taxon>
        <taxon>Bacillota</taxon>
        <taxon>Bacilli</taxon>
        <taxon>Bacillales</taxon>
        <taxon>Bacillaceae</taxon>
        <taxon>Bacillus</taxon>
    </lineage>
</organism>
<sequence length="448" mass="48198">MGKYFGTDGVRGVANSELTPELAFKVGRFGGYVLTKDKERPKVLIGRDTRISGHMLEGALVAGLLSIGAEVMRLGVISTPGVAYLTKAMDAEAGVMISASHNPVQDNGIKFFGGDGFKLSDEQELEIERLMDQPEDHLPRPVGADLGMVNDYFEGGQKYLQFLKQSADEDFTGIHVALDCAHGATSSLATHLFADLDADVSTMGTSPNGLNINDGVGSTHPEALAEFVKEKGADVGMAFDGDGDRLIAVDEKGNIVDGDQIMYICAKYLKSEGRLTDNTVVSTVMSNLGFYKALEAEGIKSVQTAVGDRYVVEAMKKGGFTLGGEQSGHLIFLDYNTTGDGLLSAIMLMNTIKMTGKPLSELAAEMQKFPQLLLNVKVTDKHKVTENEKVKAVIEEVEKEMNGDGRILVRPSGTEPLVRVMAEAKTKELCEKYVGRIADVVKAEMGAE</sequence>
<keyword id="KW-0413">Isomerase</keyword>
<keyword id="KW-0460">Magnesium</keyword>
<keyword id="KW-0479">Metal-binding</keyword>
<keyword id="KW-0597">Phosphoprotein</keyword>
<keyword id="KW-1185">Reference proteome</keyword>
<name>GLMM_BACLD</name>
<gene>
    <name evidence="1" type="primary">glmM</name>
    <name type="ordered locus">BLi00203</name>
    <name type="ordered locus">BL02703</name>
</gene>